<comment type="function">
    <text evidence="3">Catalyzes the NAD-dependent oxidation of vanillin to vanillic acid.</text>
</comment>
<comment type="catalytic activity">
    <reaction evidence="3">
        <text>vanillin + NAD(+) + H2O = vanillate + NADH + 2 H(+)</text>
        <dbReference type="Rhea" id="RHEA:13309"/>
        <dbReference type="ChEBI" id="CHEBI:15377"/>
        <dbReference type="ChEBI" id="CHEBI:15378"/>
        <dbReference type="ChEBI" id="CHEBI:16632"/>
        <dbReference type="ChEBI" id="CHEBI:18346"/>
        <dbReference type="ChEBI" id="CHEBI:57540"/>
        <dbReference type="ChEBI" id="CHEBI:57945"/>
        <dbReference type="EC" id="1.2.1.67"/>
    </reaction>
</comment>
<comment type="similarity">
    <text evidence="4">Belongs to the aldehyde dehydrogenase family.</text>
</comment>
<reference key="1">
    <citation type="journal article" date="1997" name="J. Bacteriol.">
        <title>Molecular characterization of genes of Pseudomonas sp. strain HR199 involved in bioconversion of vanillin to protocatechuate.</title>
        <authorList>
            <person name="Priefert H."/>
            <person name="Rabenhorst J."/>
            <person name="Steinbuechel A."/>
        </authorList>
    </citation>
    <scope>NUCLEOTIDE SEQUENCE [GENOMIC DNA]</scope>
    <scope>FUNCTION</scope>
    <scope>CATALYTIC ACTIVITY</scope>
</reference>
<sequence length="481" mass="50837">MFHVPLLIGGKPCSASDERTFERRSPLTGEVVSRVAAASLEDADAAVAAAQAAFPEWAALAPSERRARLLRAADLLEDRSSEFTAAASETGAAGNWYGFNVYLAAGMLREAAAMTTQIQGDVIPSNVPGSFAMAVRQPCGVVLGIAPWNAPVILGVRAVAMPLACGNTVVLKSSELSPFTHRLIGQVLHDAGLGDGVVNVISNAPQDAPAVVERLIANPAVRRVNFTGSTHVGRIIGELSARHLKPAVLELGGKAPFLVLDDADLDAAVEAAAFGAYFNQGQICMSTERLIVTAVADAFVEKLARKVATLRAGDPNDPQSVLGSLIDANAGQRIQVLVDDALAKGARQVVGGGLDGSIMQPMLLDQVTEEMRLYREESFGPVAVVLRGDGDEELLRLANDSEFGLSAAIFSRDVSRAMELAQRVDSGICHINGPTVHDEAQMPFGGVKSSGYGSFGSRASIEHFTQLRWLTIQNGPRHYPI</sequence>
<evidence type="ECO:0000250" key="1"/>
<evidence type="ECO:0000255" key="2">
    <source>
        <dbReference type="PROSITE-ProRule" id="PRU10007"/>
    </source>
</evidence>
<evidence type="ECO:0000269" key="3">
    <source>
    </source>
</evidence>
<evidence type="ECO:0000305" key="4"/>
<protein>
    <recommendedName>
        <fullName>Vanillin dehydrogenase</fullName>
        <ecNumber>1.2.1.67</ecNumber>
    </recommendedName>
</protein>
<name>VDH_PSEUH</name>
<accession>O05619</accession>
<keyword id="KW-0520">NAD</keyword>
<keyword id="KW-0560">Oxidoreductase</keyword>
<organism>
    <name type="scientific">Pseudomonas sp. (strain HR199 / DSM 7063)</name>
    <dbReference type="NCBI Taxonomy" id="86003"/>
    <lineage>
        <taxon>Bacteria</taxon>
        <taxon>Pseudomonadati</taxon>
        <taxon>Pseudomonadota</taxon>
        <taxon>Gammaproteobacteria</taxon>
        <taxon>Pseudomonadales</taxon>
        <taxon>Pseudomonadaceae</taxon>
        <taxon>Pseudomonas</taxon>
    </lineage>
</organism>
<proteinExistence type="evidence at protein level"/>
<feature type="chain" id="PRO_0000418952" description="Vanillin dehydrogenase">
    <location>
        <begin position="1"/>
        <end position="481"/>
    </location>
</feature>
<feature type="active site" evidence="2">
    <location>
        <position position="250"/>
    </location>
</feature>
<feature type="active site" evidence="2">
    <location>
        <position position="284"/>
    </location>
</feature>
<feature type="binding site" evidence="1">
    <location>
        <begin position="228"/>
        <end position="233"/>
    </location>
    <ligand>
        <name>NAD(+)</name>
        <dbReference type="ChEBI" id="CHEBI:57540"/>
    </ligand>
</feature>
<gene>
    <name type="primary">vdh</name>
</gene>
<dbReference type="EC" id="1.2.1.67"/>
<dbReference type="EMBL" id="Y11520">
    <property type="protein sequence ID" value="CAA72286.1"/>
    <property type="molecule type" value="Genomic_DNA"/>
</dbReference>
<dbReference type="SMR" id="O05619"/>
<dbReference type="BioCyc" id="MetaCyc:MONOMER-17594"/>
<dbReference type="GO" id="GO:0050608">
    <property type="term" value="F:vanillin dehydrogenase activity"/>
    <property type="evidence" value="ECO:0000314"/>
    <property type="project" value="CACAO"/>
</dbReference>
<dbReference type="CDD" id="cd07105">
    <property type="entry name" value="ALDH_SaliADH"/>
    <property type="match status" value="1"/>
</dbReference>
<dbReference type="FunFam" id="3.40.309.10:FF:000010">
    <property type="entry name" value="Gamma-aminobutyraldehyde dehydrogenase"/>
    <property type="match status" value="1"/>
</dbReference>
<dbReference type="Gene3D" id="3.40.605.10">
    <property type="entry name" value="Aldehyde Dehydrogenase, Chain A, domain 1"/>
    <property type="match status" value="1"/>
</dbReference>
<dbReference type="Gene3D" id="3.40.309.10">
    <property type="entry name" value="Aldehyde Dehydrogenase, Chain A, domain 2"/>
    <property type="match status" value="1"/>
</dbReference>
<dbReference type="InterPro" id="IPR016161">
    <property type="entry name" value="Ald_DH/histidinol_DH"/>
</dbReference>
<dbReference type="InterPro" id="IPR016163">
    <property type="entry name" value="Ald_DH_C"/>
</dbReference>
<dbReference type="InterPro" id="IPR029510">
    <property type="entry name" value="Ald_DH_CS_GLU"/>
</dbReference>
<dbReference type="InterPro" id="IPR016162">
    <property type="entry name" value="Ald_DH_N"/>
</dbReference>
<dbReference type="InterPro" id="IPR015590">
    <property type="entry name" value="Aldehyde_DH_dom"/>
</dbReference>
<dbReference type="PANTHER" id="PTHR42986">
    <property type="entry name" value="BENZALDEHYDE DEHYDROGENASE YFMT"/>
    <property type="match status" value="1"/>
</dbReference>
<dbReference type="PANTHER" id="PTHR42986:SF1">
    <property type="entry name" value="BENZALDEHYDE DEHYDROGENASE YFMT"/>
    <property type="match status" value="1"/>
</dbReference>
<dbReference type="Pfam" id="PF00171">
    <property type="entry name" value="Aldedh"/>
    <property type="match status" value="1"/>
</dbReference>
<dbReference type="SUPFAM" id="SSF53720">
    <property type="entry name" value="ALDH-like"/>
    <property type="match status" value="1"/>
</dbReference>
<dbReference type="PROSITE" id="PS00687">
    <property type="entry name" value="ALDEHYDE_DEHYDR_GLU"/>
    <property type="match status" value="1"/>
</dbReference>